<organism>
    <name type="scientific">Rhizobium rhizogenes (strain K84 / ATCC BAA-868)</name>
    <name type="common">Agrobacterium radiobacter</name>
    <dbReference type="NCBI Taxonomy" id="311403"/>
    <lineage>
        <taxon>Bacteria</taxon>
        <taxon>Pseudomonadati</taxon>
        <taxon>Pseudomonadota</taxon>
        <taxon>Alphaproteobacteria</taxon>
        <taxon>Hyphomicrobiales</taxon>
        <taxon>Rhizobiaceae</taxon>
        <taxon>Rhizobium/Agrobacterium group</taxon>
        <taxon>Rhizobium</taxon>
    </lineage>
</organism>
<reference key="1">
    <citation type="journal article" date="2009" name="J. Bacteriol.">
        <title>Genome sequences of three Agrobacterium biovars help elucidate the evolution of multichromosome genomes in bacteria.</title>
        <authorList>
            <person name="Slater S.C."/>
            <person name="Goldman B.S."/>
            <person name="Goodner B."/>
            <person name="Setubal J.C."/>
            <person name="Farrand S.K."/>
            <person name="Nester E.W."/>
            <person name="Burr T.J."/>
            <person name="Banta L."/>
            <person name="Dickerman A.W."/>
            <person name="Paulsen I."/>
            <person name="Otten L."/>
            <person name="Suen G."/>
            <person name="Welch R."/>
            <person name="Almeida N.F."/>
            <person name="Arnold F."/>
            <person name="Burton O.T."/>
            <person name="Du Z."/>
            <person name="Ewing A."/>
            <person name="Godsy E."/>
            <person name="Heisel S."/>
            <person name="Houmiel K.L."/>
            <person name="Jhaveri J."/>
            <person name="Lu J."/>
            <person name="Miller N.M."/>
            <person name="Norton S."/>
            <person name="Chen Q."/>
            <person name="Phoolcharoen W."/>
            <person name="Ohlin V."/>
            <person name="Ondrusek D."/>
            <person name="Pride N."/>
            <person name="Stricklin S.L."/>
            <person name="Sun J."/>
            <person name="Wheeler C."/>
            <person name="Wilson L."/>
            <person name="Zhu H."/>
            <person name="Wood D.W."/>
        </authorList>
    </citation>
    <scope>NUCLEOTIDE SEQUENCE [LARGE SCALE GENOMIC DNA]</scope>
    <source>
        <strain>K84 / ATCC BAA-868</strain>
    </source>
</reference>
<gene>
    <name evidence="1" type="primary">fusA</name>
    <name type="ordered locus">Arad_1968</name>
</gene>
<feature type="chain" id="PRO_1000201426" description="Elongation factor G">
    <location>
        <begin position="1"/>
        <end position="699"/>
    </location>
</feature>
<feature type="domain" description="tr-type G">
    <location>
        <begin position="8"/>
        <end position="288"/>
    </location>
</feature>
<feature type="binding site" evidence="1">
    <location>
        <begin position="17"/>
        <end position="24"/>
    </location>
    <ligand>
        <name>GTP</name>
        <dbReference type="ChEBI" id="CHEBI:37565"/>
    </ligand>
</feature>
<feature type="binding site" evidence="1">
    <location>
        <begin position="86"/>
        <end position="90"/>
    </location>
    <ligand>
        <name>GTP</name>
        <dbReference type="ChEBI" id="CHEBI:37565"/>
    </ligand>
</feature>
<feature type="binding site" evidence="1">
    <location>
        <begin position="140"/>
        <end position="143"/>
    </location>
    <ligand>
        <name>GTP</name>
        <dbReference type="ChEBI" id="CHEBI:37565"/>
    </ligand>
</feature>
<accession>B9JDS6</accession>
<evidence type="ECO:0000255" key="1">
    <source>
        <dbReference type="HAMAP-Rule" id="MF_00054"/>
    </source>
</evidence>
<name>EFG_RHIR8</name>
<protein>
    <recommendedName>
        <fullName evidence="1">Elongation factor G</fullName>
        <shortName evidence="1">EF-G</shortName>
    </recommendedName>
</protein>
<keyword id="KW-0963">Cytoplasm</keyword>
<keyword id="KW-0251">Elongation factor</keyword>
<keyword id="KW-0342">GTP-binding</keyword>
<keyword id="KW-0547">Nucleotide-binding</keyword>
<keyword id="KW-0648">Protein biosynthesis</keyword>
<comment type="function">
    <text evidence="1">Catalyzes the GTP-dependent ribosomal translocation step during translation elongation. During this step, the ribosome changes from the pre-translocational (PRE) to the post-translocational (POST) state as the newly formed A-site-bound peptidyl-tRNA and P-site-bound deacylated tRNA move to the P and E sites, respectively. Catalyzes the coordinated movement of the two tRNA molecules, the mRNA and conformational changes in the ribosome.</text>
</comment>
<comment type="subcellular location">
    <subcellularLocation>
        <location evidence="1">Cytoplasm</location>
    </subcellularLocation>
</comment>
<comment type="similarity">
    <text evidence="1">Belongs to the TRAFAC class translation factor GTPase superfamily. Classic translation factor GTPase family. EF-G/EF-2 subfamily.</text>
</comment>
<proteinExistence type="inferred from homology"/>
<dbReference type="EMBL" id="CP000628">
    <property type="protein sequence ID" value="ACM26277.1"/>
    <property type="molecule type" value="Genomic_DNA"/>
</dbReference>
<dbReference type="RefSeq" id="WP_007702215.1">
    <property type="nucleotide sequence ID" value="NC_011985.1"/>
</dbReference>
<dbReference type="SMR" id="B9JDS6"/>
<dbReference type="STRING" id="311403.Arad_1968"/>
<dbReference type="GeneID" id="86848164"/>
<dbReference type="KEGG" id="ara:Arad_1968"/>
<dbReference type="eggNOG" id="COG0480">
    <property type="taxonomic scope" value="Bacteria"/>
</dbReference>
<dbReference type="HOGENOM" id="CLU_002794_4_1_5"/>
<dbReference type="Proteomes" id="UP000001600">
    <property type="component" value="Chromosome 1"/>
</dbReference>
<dbReference type="GO" id="GO:0005737">
    <property type="term" value="C:cytoplasm"/>
    <property type="evidence" value="ECO:0007669"/>
    <property type="project" value="UniProtKB-SubCell"/>
</dbReference>
<dbReference type="GO" id="GO:0005525">
    <property type="term" value="F:GTP binding"/>
    <property type="evidence" value="ECO:0007669"/>
    <property type="project" value="UniProtKB-UniRule"/>
</dbReference>
<dbReference type="GO" id="GO:0003924">
    <property type="term" value="F:GTPase activity"/>
    <property type="evidence" value="ECO:0007669"/>
    <property type="project" value="InterPro"/>
</dbReference>
<dbReference type="GO" id="GO:0003746">
    <property type="term" value="F:translation elongation factor activity"/>
    <property type="evidence" value="ECO:0007669"/>
    <property type="project" value="UniProtKB-UniRule"/>
</dbReference>
<dbReference type="GO" id="GO:0032790">
    <property type="term" value="P:ribosome disassembly"/>
    <property type="evidence" value="ECO:0007669"/>
    <property type="project" value="TreeGrafter"/>
</dbReference>
<dbReference type="CDD" id="cd01886">
    <property type="entry name" value="EF-G"/>
    <property type="match status" value="1"/>
</dbReference>
<dbReference type="CDD" id="cd16262">
    <property type="entry name" value="EFG_III"/>
    <property type="match status" value="1"/>
</dbReference>
<dbReference type="CDD" id="cd01434">
    <property type="entry name" value="EFG_mtEFG1_IV"/>
    <property type="match status" value="1"/>
</dbReference>
<dbReference type="CDD" id="cd03713">
    <property type="entry name" value="EFG_mtEFG_C"/>
    <property type="match status" value="1"/>
</dbReference>
<dbReference type="CDD" id="cd04088">
    <property type="entry name" value="EFG_mtEFG_II"/>
    <property type="match status" value="1"/>
</dbReference>
<dbReference type="FunFam" id="2.40.30.10:FF:000006">
    <property type="entry name" value="Elongation factor G"/>
    <property type="match status" value="1"/>
</dbReference>
<dbReference type="FunFam" id="3.30.230.10:FF:000003">
    <property type="entry name" value="Elongation factor G"/>
    <property type="match status" value="1"/>
</dbReference>
<dbReference type="FunFam" id="3.30.70.240:FF:000001">
    <property type="entry name" value="Elongation factor G"/>
    <property type="match status" value="1"/>
</dbReference>
<dbReference type="FunFam" id="3.30.70.870:FF:000001">
    <property type="entry name" value="Elongation factor G"/>
    <property type="match status" value="1"/>
</dbReference>
<dbReference type="FunFam" id="3.40.50.300:FF:000029">
    <property type="entry name" value="Elongation factor G"/>
    <property type="match status" value="1"/>
</dbReference>
<dbReference type="Gene3D" id="3.30.230.10">
    <property type="match status" value="1"/>
</dbReference>
<dbReference type="Gene3D" id="3.30.70.240">
    <property type="match status" value="1"/>
</dbReference>
<dbReference type="Gene3D" id="3.30.70.870">
    <property type="entry name" value="Elongation Factor G (Translational Gtpase), domain 3"/>
    <property type="match status" value="1"/>
</dbReference>
<dbReference type="Gene3D" id="3.40.50.300">
    <property type="entry name" value="P-loop containing nucleotide triphosphate hydrolases"/>
    <property type="match status" value="1"/>
</dbReference>
<dbReference type="Gene3D" id="2.40.30.10">
    <property type="entry name" value="Translation factors"/>
    <property type="match status" value="1"/>
</dbReference>
<dbReference type="HAMAP" id="MF_00054_B">
    <property type="entry name" value="EF_G_EF_2_B"/>
    <property type="match status" value="1"/>
</dbReference>
<dbReference type="InterPro" id="IPR053905">
    <property type="entry name" value="EF-G-like_DII"/>
</dbReference>
<dbReference type="InterPro" id="IPR041095">
    <property type="entry name" value="EFG_II"/>
</dbReference>
<dbReference type="InterPro" id="IPR009022">
    <property type="entry name" value="EFG_III"/>
</dbReference>
<dbReference type="InterPro" id="IPR035647">
    <property type="entry name" value="EFG_III/V"/>
</dbReference>
<dbReference type="InterPro" id="IPR047872">
    <property type="entry name" value="EFG_IV"/>
</dbReference>
<dbReference type="InterPro" id="IPR035649">
    <property type="entry name" value="EFG_V"/>
</dbReference>
<dbReference type="InterPro" id="IPR000640">
    <property type="entry name" value="EFG_V-like"/>
</dbReference>
<dbReference type="InterPro" id="IPR031157">
    <property type="entry name" value="G_TR_CS"/>
</dbReference>
<dbReference type="InterPro" id="IPR027417">
    <property type="entry name" value="P-loop_NTPase"/>
</dbReference>
<dbReference type="InterPro" id="IPR020568">
    <property type="entry name" value="Ribosomal_Su5_D2-typ_SF"/>
</dbReference>
<dbReference type="InterPro" id="IPR014721">
    <property type="entry name" value="Ribsml_uS5_D2-typ_fold_subgr"/>
</dbReference>
<dbReference type="InterPro" id="IPR005225">
    <property type="entry name" value="Small_GTP-bd"/>
</dbReference>
<dbReference type="InterPro" id="IPR000795">
    <property type="entry name" value="T_Tr_GTP-bd_dom"/>
</dbReference>
<dbReference type="InterPro" id="IPR009000">
    <property type="entry name" value="Transl_B-barrel_sf"/>
</dbReference>
<dbReference type="InterPro" id="IPR004540">
    <property type="entry name" value="Transl_elong_EFG/EF2"/>
</dbReference>
<dbReference type="InterPro" id="IPR005517">
    <property type="entry name" value="Transl_elong_EFG/EF2_IV"/>
</dbReference>
<dbReference type="NCBIfam" id="TIGR00484">
    <property type="entry name" value="EF-G"/>
    <property type="match status" value="1"/>
</dbReference>
<dbReference type="NCBIfam" id="NF009381">
    <property type="entry name" value="PRK12740.1-5"/>
    <property type="match status" value="1"/>
</dbReference>
<dbReference type="NCBIfam" id="TIGR00231">
    <property type="entry name" value="small_GTP"/>
    <property type="match status" value="1"/>
</dbReference>
<dbReference type="PANTHER" id="PTHR43261:SF1">
    <property type="entry name" value="RIBOSOME-RELEASING FACTOR 2, MITOCHONDRIAL"/>
    <property type="match status" value="1"/>
</dbReference>
<dbReference type="PANTHER" id="PTHR43261">
    <property type="entry name" value="TRANSLATION ELONGATION FACTOR G-RELATED"/>
    <property type="match status" value="1"/>
</dbReference>
<dbReference type="Pfam" id="PF22042">
    <property type="entry name" value="EF-G_D2"/>
    <property type="match status" value="1"/>
</dbReference>
<dbReference type="Pfam" id="PF00679">
    <property type="entry name" value="EFG_C"/>
    <property type="match status" value="1"/>
</dbReference>
<dbReference type="Pfam" id="PF14492">
    <property type="entry name" value="EFG_III"/>
    <property type="match status" value="1"/>
</dbReference>
<dbReference type="Pfam" id="PF03764">
    <property type="entry name" value="EFG_IV"/>
    <property type="match status" value="1"/>
</dbReference>
<dbReference type="Pfam" id="PF00009">
    <property type="entry name" value="GTP_EFTU"/>
    <property type="match status" value="1"/>
</dbReference>
<dbReference type="PRINTS" id="PR00315">
    <property type="entry name" value="ELONGATNFCT"/>
</dbReference>
<dbReference type="SMART" id="SM00838">
    <property type="entry name" value="EFG_C"/>
    <property type="match status" value="1"/>
</dbReference>
<dbReference type="SMART" id="SM00889">
    <property type="entry name" value="EFG_IV"/>
    <property type="match status" value="1"/>
</dbReference>
<dbReference type="SUPFAM" id="SSF54980">
    <property type="entry name" value="EF-G C-terminal domain-like"/>
    <property type="match status" value="2"/>
</dbReference>
<dbReference type="SUPFAM" id="SSF52540">
    <property type="entry name" value="P-loop containing nucleoside triphosphate hydrolases"/>
    <property type="match status" value="1"/>
</dbReference>
<dbReference type="SUPFAM" id="SSF54211">
    <property type="entry name" value="Ribosomal protein S5 domain 2-like"/>
    <property type="match status" value="1"/>
</dbReference>
<dbReference type="SUPFAM" id="SSF50447">
    <property type="entry name" value="Translation proteins"/>
    <property type="match status" value="1"/>
</dbReference>
<dbReference type="PROSITE" id="PS00301">
    <property type="entry name" value="G_TR_1"/>
    <property type="match status" value="1"/>
</dbReference>
<dbReference type="PROSITE" id="PS51722">
    <property type="entry name" value="G_TR_2"/>
    <property type="match status" value="1"/>
</dbReference>
<sequence length="699" mass="77748">MAREYKIEDYRNFGIMAHIDAGKTTTTERILYYTGKSHKIGEVHDGAATMDWMEQEQERGITITSAATTTYWKGRDGKTRRFNIIDTPGHVDFTIEVERSLRVLDGAIALLDANAGVEPQTETVWRQAEKYNVPRMIFCNKMDKTGADFYRSVEMIKTRLGATAVVMQLPIGAETEFKGVIDLIEMNALIWRDESLGAQWDVVEIPEDMKAKAEEYREKLIETVVEIDEAATEAYLEGNLPDNDQIRALVRRGTIDVKFHPMFCGTAFKNKGVQPLLDAVVDYLPSPLDIPAIKGIDFKTDAEIERHADDSEPLSMLAFKIMNDPFVGSLTFARIYSGKLEKGASVMNTVKDKRERVGRMLQMHSNSREDIEEAFAGDIVALAGLKETTTGDTLCDPLKPVILERMEFPEPVIQIAIEPKTKGDQEKMGLALNRLAAEDPSFRVKTDQESGQTIIAGMGELHLDIIVDRMRREFKVEATVGAPQVAYRETITRLTEKDYTHKKQSGGTGQFARVKIVFEPNPEGDDFKFESKIVGGSVPKEYIPGVQKGIESVLSSGPLAGFPMLGVKATLIDGAFHDVDSSVLAFEIASRACFREAAREAGAQLLEPMMKVEVVTPEDYVGDVIGDLNSRRGQIQGQEARGIAVVINANVPLANMFKYVDNLRSMSQGRAQYTMTFDHYAPVPSNVAQEIQAKYSGQK</sequence>